<keyword id="KW-0028">Amino-acid biosynthesis</keyword>
<keyword id="KW-0368">Histidine biosynthesis</keyword>
<keyword id="KW-0378">Hydrolase</keyword>
<keyword id="KW-0486">Methionine biosynthesis</keyword>
<keyword id="KW-0511">Multifunctional enzyme</keyword>
<keyword id="KW-0521">NADP</keyword>
<keyword id="KW-0554">One-carbon metabolism</keyword>
<keyword id="KW-0560">Oxidoreductase</keyword>
<keyword id="KW-0658">Purine biosynthesis</keyword>
<keyword id="KW-1185">Reference proteome</keyword>
<protein>
    <recommendedName>
        <fullName evidence="1">Bifunctional protein FolD</fullName>
    </recommendedName>
    <domain>
        <recommendedName>
            <fullName evidence="1">Methylenetetrahydrofolate dehydrogenase</fullName>
            <ecNumber evidence="1">1.5.1.5</ecNumber>
        </recommendedName>
    </domain>
    <domain>
        <recommendedName>
            <fullName evidence="1">Methenyltetrahydrofolate cyclohydrolase</fullName>
            <ecNumber evidence="1">3.5.4.9</ecNumber>
        </recommendedName>
    </domain>
</protein>
<comment type="function">
    <text evidence="1">Catalyzes the oxidation of 5,10-methylenetetrahydrofolate to 5,10-methenyltetrahydrofolate and then the hydrolysis of 5,10-methenyltetrahydrofolate to 10-formyltetrahydrofolate.</text>
</comment>
<comment type="catalytic activity">
    <reaction evidence="1">
        <text>(6R)-5,10-methylene-5,6,7,8-tetrahydrofolate + NADP(+) = (6R)-5,10-methenyltetrahydrofolate + NADPH</text>
        <dbReference type="Rhea" id="RHEA:22812"/>
        <dbReference type="ChEBI" id="CHEBI:15636"/>
        <dbReference type="ChEBI" id="CHEBI:57455"/>
        <dbReference type="ChEBI" id="CHEBI:57783"/>
        <dbReference type="ChEBI" id="CHEBI:58349"/>
        <dbReference type="EC" id="1.5.1.5"/>
    </reaction>
</comment>
<comment type="catalytic activity">
    <reaction evidence="1">
        <text>(6R)-5,10-methenyltetrahydrofolate + H2O = (6R)-10-formyltetrahydrofolate + H(+)</text>
        <dbReference type="Rhea" id="RHEA:23700"/>
        <dbReference type="ChEBI" id="CHEBI:15377"/>
        <dbReference type="ChEBI" id="CHEBI:15378"/>
        <dbReference type="ChEBI" id="CHEBI:57455"/>
        <dbReference type="ChEBI" id="CHEBI:195366"/>
        <dbReference type="EC" id="3.5.4.9"/>
    </reaction>
</comment>
<comment type="pathway">
    <text evidence="1">One-carbon metabolism; tetrahydrofolate interconversion.</text>
</comment>
<comment type="subunit">
    <text evidence="1">Homodimer.</text>
</comment>
<comment type="similarity">
    <text evidence="1">Belongs to the tetrahydrofolate dehydrogenase/cyclohydrolase family.</text>
</comment>
<name>FOLD_FERNB</name>
<gene>
    <name evidence="1" type="primary">folD</name>
    <name type="ordered locus">Fnod_1338</name>
</gene>
<dbReference type="EC" id="1.5.1.5" evidence="1"/>
<dbReference type="EC" id="3.5.4.9" evidence="1"/>
<dbReference type="EMBL" id="CP000771">
    <property type="protein sequence ID" value="ABS61185.1"/>
    <property type="molecule type" value="Genomic_DNA"/>
</dbReference>
<dbReference type="RefSeq" id="WP_011994494.1">
    <property type="nucleotide sequence ID" value="NC_009718.1"/>
</dbReference>
<dbReference type="SMR" id="A7HMQ2"/>
<dbReference type="STRING" id="381764.Fnod_1338"/>
<dbReference type="KEGG" id="fno:Fnod_1338"/>
<dbReference type="eggNOG" id="COG0190">
    <property type="taxonomic scope" value="Bacteria"/>
</dbReference>
<dbReference type="HOGENOM" id="CLU_034045_2_1_0"/>
<dbReference type="OrthoDB" id="9803580at2"/>
<dbReference type="UniPathway" id="UPA00193"/>
<dbReference type="Proteomes" id="UP000002415">
    <property type="component" value="Chromosome"/>
</dbReference>
<dbReference type="GO" id="GO:0005829">
    <property type="term" value="C:cytosol"/>
    <property type="evidence" value="ECO:0007669"/>
    <property type="project" value="TreeGrafter"/>
</dbReference>
<dbReference type="GO" id="GO:0004477">
    <property type="term" value="F:methenyltetrahydrofolate cyclohydrolase activity"/>
    <property type="evidence" value="ECO:0007669"/>
    <property type="project" value="UniProtKB-UniRule"/>
</dbReference>
<dbReference type="GO" id="GO:0004488">
    <property type="term" value="F:methylenetetrahydrofolate dehydrogenase (NADP+) activity"/>
    <property type="evidence" value="ECO:0007669"/>
    <property type="project" value="UniProtKB-UniRule"/>
</dbReference>
<dbReference type="GO" id="GO:0000105">
    <property type="term" value="P:L-histidine biosynthetic process"/>
    <property type="evidence" value="ECO:0007669"/>
    <property type="project" value="UniProtKB-KW"/>
</dbReference>
<dbReference type="GO" id="GO:0009086">
    <property type="term" value="P:methionine biosynthetic process"/>
    <property type="evidence" value="ECO:0007669"/>
    <property type="project" value="UniProtKB-KW"/>
</dbReference>
<dbReference type="GO" id="GO:0006164">
    <property type="term" value="P:purine nucleotide biosynthetic process"/>
    <property type="evidence" value="ECO:0007669"/>
    <property type="project" value="UniProtKB-KW"/>
</dbReference>
<dbReference type="GO" id="GO:0035999">
    <property type="term" value="P:tetrahydrofolate interconversion"/>
    <property type="evidence" value="ECO:0007669"/>
    <property type="project" value="UniProtKB-UniRule"/>
</dbReference>
<dbReference type="CDD" id="cd01080">
    <property type="entry name" value="NAD_bind_m-THF_DH_Cyclohyd"/>
    <property type="match status" value="1"/>
</dbReference>
<dbReference type="Gene3D" id="3.40.50.10860">
    <property type="entry name" value="Leucine Dehydrogenase, chain A, domain 1"/>
    <property type="match status" value="1"/>
</dbReference>
<dbReference type="Gene3D" id="3.40.50.720">
    <property type="entry name" value="NAD(P)-binding Rossmann-like Domain"/>
    <property type="match status" value="1"/>
</dbReference>
<dbReference type="HAMAP" id="MF_01576">
    <property type="entry name" value="THF_DHG_CYH"/>
    <property type="match status" value="1"/>
</dbReference>
<dbReference type="InterPro" id="IPR046346">
    <property type="entry name" value="Aminoacid_DH-like_N_sf"/>
</dbReference>
<dbReference type="InterPro" id="IPR036291">
    <property type="entry name" value="NAD(P)-bd_dom_sf"/>
</dbReference>
<dbReference type="InterPro" id="IPR000672">
    <property type="entry name" value="THF_DH/CycHdrlase"/>
</dbReference>
<dbReference type="InterPro" id="IPR020630">
    <property type="entry name" value="THF_DH/CycHdrlase_cat_dom"/>
</dbReference>
<dbReference type="InterPro" id="IPR020631">
    <property type="entry name" value="THF_DH/CycHdrlase_NAD-bd_dom"/>
</dbReference>
<dbReference type="PANTHER" id="PTHR48099:SF5">
    <property type="entry name" value="C-1-TETRAHYDROFOLATE SYNTHASE, CYTOPLASMIC"/>
    <property type="match status" value="1"/>
</dbReference>
<dbReference type="PANTHER" id="PTHR48099">
    <property type="entry name" value="C-1-TETRAHYDROFOLATE SYNTHASE, CYTOPLASMIC-RELATED"/>
    <property type="match status" value="1"/>
</dbReference>
<dbReference type="Pfam" id="PF00763">
    <property type="entry name" value="THF_DHG_CYH"/>
    <property type="match status" value="1"/>
</dbReference>
<dbReference type="Pfam" id="PF02882">
    <property type="entry name" value="THF_DHG_CYH_C"/>
    <property type="match status" value="1"/>
</dbReference>
<dbReference type="PRINTS" id="PR00085">
    <property type="entry name" value="THFDHDRGNASE"/>
</dbReference>
<dbReference type="SUPFAM" id="SSF53223">
    <property type="entry name" value="Aminoacid dehydrogenase-like, N-terminal domain"/>
    <property type="match status" value="1"/>
</dbReference>
<dbReference type="SUPFAM" id="SSF51735">
    <property type="entry name" value="NAD(P)-binding Rossmann-fold domains"/>
    <property type="match status" value="1"/>
</dbReference>
<evidence type="ECO:0000255" key="1">
    <source>
        <dbReference type="HAMAP-Rule" id="MF_01576"/>
    </source>
</evidence>
<proteinExistence type="inferred from homology"/>
<feature type="chain" id="PRO_1000073609" description="Bifunctional protein FolD">
    <location>
        <begin position="1"/>
        <end position="272"/>
    </location>
</feature>
<feature type="binding site" evidence="1">
    <location>
        <begin position="155"/>
        <end position="157"/>
    </location>
    <ligand>
        <name>NADP(+)</name>
        <dbReference type="ChEBI" id="CHEBI:58349"/>
    </ligand>
</feature>
<feature type="binding site" evidence="1">
    <location>
        <position position="182"/>
    </location>
    <ligand>
        <name>NADP(+)</name>
        <dbReference type="ChEBI" id="CHEBI:58349"/>
    </ligand>
</feature>
<feature type="binding site" evidence="1">
    <location>
        <position position="223"/>
    </location>
    <ligand>
        <name>NADP(+)</name>
        <dbReference type="ChEBI" id="CHEBI:58349"/>
    </ligand>
</feature>
<sequence>MFINIEPLYSSMVENIKERVSKLSKPPKLVAVTCQPDSSTLAYLRSQEKQAKRFGIDFAVYEAPKAMDLKILLPKLSADGSVNGIFLTHPLPSDISEYEAVSLISPDKDIEGRHPINLGNILYDKPVFPPCTAEAVLRIINYLTNPSGKKIAVIGRSVTVGKPLAMLLLQKGIDATVTICHSRTKDIAEITKNSDIVVVAIGKAKMFGKDYFKPGTIVIDVGINVEGDEIVGDVDPSVSEICELTPVPGGVGRITTLVLMEHTVKAAEMSLK</sequence>
<reference key="1">
    <citation type="submission" date="2007-07" db="EMBL/GenBank/DDBJ databases">
        <title>Complete sequence of Fervidobacterium nodosum Rt17-B1.</title>
        <authorList>
            <consortium name="US DOE Joint Genome Institute"/>
            <person name="Copeland A."/>
            <person name="Lucas S."/>
            <person name="Lapidus A."/>
            <person name="Barry K."/>
            <person name="Glavina del Rio T."/>
            <person name="Dalin E."/>
            <person name="Tice H."/>
            <person name="Pitluck S."/>
            <person name="Saunders E."/>
            <person name="Brettin T."/>
            <person name="Bruce D."/>
            <person name="Detter J.C."/>
            <person name="Han C."/>
            <person name="Schmutz J."/>
            <person name="Larimer F."/>
            <person name="Land M."/>
            <person name="Hauser L."/>
            <person name="Kyrpides N."/>
            <person name="Mikhailova N."/>
            <person name="Nelson K."/>
            <person name="Gogarten J.P."/>
            <person name="Noll K."/>
            <person name="Richardson P."/>
        </authorList>
    </citation>
    <scope>NUCLEOTIDE SEQUENCE [LARGE SCALE GENOMIC DNA]</scope>
    <source>
        <strain>ATCC 35602 / DSM 5306 / Rt17-B1</strain>
    </source>
</reference>
<accession>A7HMQ2</accession>
<organism>
    <name type="scientific">Fervidobacterium nodosum (strain ATCC 35602 / DSM 5306 / Rt17-B1)</name>
    <dbReference type="NCBI Taxonomy" id="381764"/>
    <lineage>
        <taxon>Bacteria</taxon>
        <taxon>Thermotogati</taxon>
        <taxon>Thermotogota</taxon>
        <taxon>Thermotogae</taxon>
        <taxon>Thermotogales</taxon>
        <taxon>Fervidobacteriaceae</taxon>
        <taxon>Fervidobacterium</taxon>
    </lineage>
</organism>